<accession>Q2RQV1</accession>
<feature type="chain" id="PRO_0000234880" description="Large ribosomal subunit protein uL10">
    <location>
        <begin position="1"/>
        <end position="172"/>
    </location>
</feature>
<protein>
    <recommendedName>
        <fullName evidence="1">Large ribosomal subunit protein uL10</fullName>
    </recommendedName>
    <alternativeName>
        <fullName evidence="2">50S ribosomal protein L10</fullName>
    </alternativeName>
</protein>
<sequence length="172" mass="18371">MNREEKKELVSELNSLFGEASACVVTHYKGMTVAELEQLRKGMRAAGASFRVTKNRITRLALADTPFEGLADLFTGPTAIAISKDPVAPAKVCVEFAKKNEKLVILGGAMQGNVLDKQGIEALAKLPSLDELRGRLIGMITTPATRIAGVTQAPAAQLARVFNAYATKEEAA</sequence>
<comment type="function">
    <text evidence="1">Forms part of the ribosomal stalk, playing a central role in the interaction of the ribosome with GTP-bound translation factors.</text>
</comment>
<comment type="subunit">
    <text evidence="1">Part of the ribosomal stalk of the 50S ribosomal subunit. The N-terminus interacts with L11 and the large rRNA to form the base of the stalk. The C-terminus forms an elongated spine to which L12 dimers bind in a sequential fashion forming a multimeric L10(L12)X complex.</text>
</comment>
<comment type="similarity">
    <text evidence="1">Belongs to the universal ribosomal protein uL10 family.</text>
</comment>
<reference key="1">
    <citation type="journal article" date="2011" name="Stand. Genomic Sci.">
        <title>Complete genome sequence of Rhodospirillum rubrum type strain (S1).</title>
        <authorList>
            <person name="Munk A.C."/>
            <person name="Copeland A."/>
            <person name="Lucas S."/>
            <person name="Lapidus A."/>
            <person name="Del Rio T.G."/>
            <person name="Barry K."/>
            <person name="Detter J.C."/>
            <person name="Hammon N."/>
            <person name="Israni S."/>
            <person name="Pitluck S."/>
            <person name="Brettin T."/>
            <person name="Bruce D."/>
            <person name="Han C."/>
            <person name="Tapia R."/>
            <person name="Gilna P."/>
            <person name="Schmutz J."/>
            <person name="Larimer F."/>
            <person name="Land M."/>
            <person name="Kyrpides N.C."/>
            <person name="Mavromatis K."/>
            <person name="Richardson P."/>
            <person name="Rohde M."/>
            <person name="Goeker M."/>
            <person name="Klenk H.P."/>
            <person name="Zhang Y."/>
            <person name="Roberts G.P."/>
            <person name="Reslewic S."/>
            <person name="Schwartz D.C."/>
        </authorList>
    </citation>
    <scope>NUCLEOTIDE SEQUENCE [LARGE SCALE GENOMIC DNA]</scope>
    <source>
        <strain>ATCC 11170 / ATH 1.1.1 / DSM 467 / LMG 4362 / NCIMB 8255 / S1</strain>
    </source>
</reference>
<dbReference type="EMBL" id="CP000230">
    <property type="protein sequence ID" value="ABC23494.1"/>
    <property type="molecule type" value="Genomic_DNA"/>
</dbReference>
<dbReference type="RefSeq" id="WP_011390507.1">
    <property type="nucleotide sequence ID" value="NC_007643.1"/>
</dbReference>
<dbReference type="RefSeq" id="YP_427781.1">
    <property type="nucleotide sequence ID" value="NC_007643.1"/>
</dbReference>
<dbReference type="SMR" id="Q2RQV1"/>
<dbReference type="STRING" id="269796.Rru_A2697"/>
<dbReference type="EnsemblBacteria" id="ABC23494">
    <property type="protein sequence ID" value="ABC23494"/>
    <property type="gene ID" value="Rru_A2697"/>
</dbReference>
<dbReference type="KEGG" id="rru:Rru_A2697"/>
<dbReference type="PATRIC" id="fig|269796.9.peg.2805"/>
<dbReference type="eggNOG" id="COG0244">
    <property type="taxonomic scope" value="Bacteria"/>
</dbReference>
<dbReference type="HOGENOM" id="CLU_092227_0_0_5"/>
<dbReference type="PhylomeDB" id="Q2RQV1"/>
<dbReference type="Proteomes" id="UP000001929">
    <property type="component" value="Chromosome"/>
</dbReference>
<dbReference type="GO" id="GO:0015934">
    <property type="term" value="C:large ribosomal subunit"/>
    <property type="evidence" value="ECO:0007669"/>
    <property type="project" value="InterPro"/>
</dbReference>
<dbReference type="GO" id="GO:0070180">
    <property type="term" value="F:large ribosomal subunit rRNA binding"/>
    <property type="evidence" value="ECO:0007669"/>
    <property type="project" value="UniProtKB-UniRule"/>
</dbReference>
<dbReference type="GO" id="GO:0003735">
    <property type="term" value="F:structural constituent of ribosome"/>
    <property type="evidence" value="ECO:0007669"/>
    <property type="project" value="InterPro"/>
</dbReference>
<dbReference type="GO" id="GO:0006412">
    <property type="term" value="P:translation"/>
    <property type="evidence" value="ECO:0007669"/>
    <property type="project" value="UniProtKB-UniRule"/>
</dbReference>
<dbReference type="CDD" id="cd05797">
    <property type="entry name" value="Ribosomal_L10"/>
    <property type="match status" value="1"/>
</dbReference>
<dbReference type="Gene3D" id="3.30.70.1730">
    <property type="match status" value="1"/>
</dbReference>
<dbReference type="Gene3D" id="6.10.250.290">
    <property type="match status" value="1"/>
</dbReference>
<dbReference type="HAMAP" id="MF_00362">
    <property type="entry name" value="Ribosomal_uL10"/>
    <property type="match status" value="1"/>
</dbReference>
<dbReference type="InterPro" id="IPR001790">
    <property type="entry name" value="Ribosomal_uL10"/>
</dbReference>
<dbReference type="InterPro" id="IPR043141">
    <property type="entry name" value="Ribosomal_uL10-like_sf"/>
</dbReference>
<dbReference type="InterPro" id="IPR022973">
    <property type="entry name" value="Ribosomal_uL10_bac"/>
</dbReference>
<dbReference type="InterPro" id="IPR047865">
    <property type="entry name" value="Ribosomal_uL10_bac_type"/>
</dbReference>
<dbReference type="InterPro" id="IPR002363">
    <property type="entry name" value="Ribosomal_uL10_CS_bac"/>
</dbReference>
<dbReference type="NCBIfam" id="NF000955">
    <property type="entry name" value="PRK00099.1-1"/>
    <property type="match status" value="1"/>
</dbReference>
<dbReference type="PANTHER" id="PTHR11560">
    <property type="entry name" value="39S RIBOSOMAL PROTEIN L10, MITOCHONDRIAL"/>
    <property type="match status" value="1"/>
</dbReference>
<dbReference type="Pfam" id="PF00466">
    <property type="entry name" value="Ribosomal_L10"/>
    <property type="match status" value="1"/>
</dbReference>
<dbReference type="SUPFAM" id="SSF160369">
    <property type="entry name" value="Ribosomal protein L10-like"/>
    <property type="match status" value="1"/>
</dbReference>
<dbReference type="PROSITE" id="PS01109">
    <property type="entry name" value="RIBOSOMAL_L10"/>
    <property type="match status" value="1"/>
</dbReference>
<gene>
    <name evidence="1" type="primary">rplJ</name>
    <name type="ordered locus">Rru_A2697</name>
</gene>
<proteinExistence type="inferred from homology"/>
<organism>
    <name type="scientific">Rhodospirillum rubrum (strain ATCC 11170 / ATH 1.1.1 / DSM 467 / LMG 4362 / NCIMB 8255 / S1)</name>
    <dbReference type="NCBI Taxonomy" id="269796"/>
    <lineage>
        <taxon>Bacteria</taxon>
        <taxon>Pseudomonadati</taxon>
        <taxon>Pseudomonadota</taxon>
        <taxon>Alphaproteobacteria</taxon>
        <taxon>Rhodospirillales</taxon>
        <taxon>Rhodospirillaceae</taxon>
        <taxon>Rhodospirillum</taxon>
    </lineage>
</organism>
<keyword id="KW-1185">Reference proteome</keyword>
<keyword id="KW-0687">Ribonucleoprotein</keyword>
<keyword id="KW-0689">Ribosomal protein</keyword>
<keyword id="KW-0694">RNA-binding</keyword>
<keyword id="KW-0699">rRNA-binding</keyword>
<name>RL10_RHORT</name>
<evidence type="ECO:0000255" key="1">
    <source>
        <dbReference type="HAMAP-Rule" id="MF_00362"/>
    </source>
</evidence>
<evidence type="ECO:0000305" key="2"/>